<organism>
    <name type="scientific">Thermoanaerobacter sp. (strain X514)</name>
    <dbReference type="NCBI Taxonomy" id="399726"/>
    <lineage>
        <taxon>Bacteria</taxon>
        <taxon>Bacillati</taxon>
        <taxon>Bacillota</taxon>
        <taxon>Clostridia</taxon>
        <taxon>Thermoanaerobacterales</taxon>
        <taxon>Thermoanaerobacteraceae</taxon>
        <taxon>Thermoanaerobacter</taxon>
    </lineage>
</organism>
<keyword id="KW-0687">Ribonucleoprotein</keyword>
<keyword id="KW-0689">Ribosomal protein</keyword>
<protein>
    <recommendedName>
        <fullName evidence="1">Small ribosomal subunit protein bS16</fullName>
    </recommendedName>
    <alternativeName>
        <fullName evidence="2">30S ribosomal protein S16</fullName>
    </alternativeName>
</protein>
<accession>B0K1V0</accession>
<dbReference type="EMBL" id="CP000923">
    <property type="protein sequence ID" value="ABY92998.1"/>
    <property type="molecule type" value="Genomic_DNA"/>
</dbReference>
<dbReference type="RefSeq" id="WP_009052427.1">
    <property type="nucleotide sequence ID" value="NC_010320.1"/>
</dbReference>
<dbReference type="SMR" id="B0K1V0"/>
<dbReference type="KEGG" id="tex:Teth514_1712"/>
<dbReference type="HOGENOM" id="CLU_100590_5_0_9"/>
<dbReference type="Proteomes" id="UP000002155">
    <property type="component" value="Chromosome"/>
</dbReference>
<dbReference type="GO" id="GO:0005737">
    <property type="term" value="C:cytoplasm"/>
    <property type="evidence" value="ECO:0007669"/>
    <property type="project" value="UniProtKB-ARBA"/>
</dbReference>
<dbReference type="GO" id="GO:0015935">
    <property type="term" value="C:small ribosomal subunit"/>
    <property type="evidence" value="ECO:0007669"/>
    <property type="project" value="TreeGrafter"/>
</dbReference>
<dbReference type="GO" id="GO:0003735">
    <property type="term" value="F:structural constituent of ribosome"/>
    <property type="evidence" value="ECO:0007669"/>
    <property type="project" value="InterPro"/>
</dbReference>
<dbReference type="GO" id="GO:0006412">
    <property type="term" value="P:translation"/>
    <property type="evidence" value="ECO:0007669"/>
    <property type="project" value="UniProtKB-UniRule"/>
</dbReference>
<dbReference type="FunFam" id="3.30.1320.10:FF:000002">
    <property type="entry name" value="30S ribosomal protein S16"/>
    <property type="match status" value="1"/>
</dbReference>
<dbReference type="Gene3D" id="3.30.1320.10">
    <property type="match status" value="1"/>
</dbReference>
<dbReference type="HAMAP" id="MF_00385">
    <property type="entry name" value="Ribosomal_bS16"/>
    <property type="match status" value="1"/>
</dbReference>
<dbReference type="InterPro" id="IPR000307">
    <property type="entry name" value="Ribosomal_bS16"/>
</dbReference>
<dbReference type="InterPro" id="IPR020592">
    <property type="entry name" value="Ribosomal_bS16_CS"/>
</dbReference>
<dbReference type="InterPro" id="IPR023803">
    <property type="entry name" value="Ribosomal_bS16_dom_sf"/>
</dbReference>
<dbReference type="NCBIfam" id="TIGR00002">
    <property type="entry name" value="S16"/>
    <property type="match status" value="1"/>
</dbReference>
<dbReference type="PANTHER" id="PTHR12919">
    <property type="entry name" value="30S RIBOSOMAL PROTEIN S16"/>
    <property type="match status" value="1"/>
</dbReference>
<dbReference type="PANTHER" id="PTHR12919:SF20">
    <property type="entry name" value="SMALL RIBOSOMAL SUBUNIT PROTEIN BS16M"/>
    <property type="match status" value="1"/>
</dbReference>
<dbReference type="Pfam" id="PF00886">
    <property type="entry name" value="Ribosomal_S16"/>
    <property type="match status" value="1"/>
</dbReference>
<dbReference type="SUPFAM" id="SSF54565">
    <property type="entry name" value="Ribosomal protein S16"/>
    <property type="match status" value="1"/>
</dbReference>
<dbReference type="PROSITE" id="PS00732">
    <property type="entry name" value="RIBOSOMAL_S16"/>
    <property type="match status" value="1"/>
</dbReference>
<evidence type="ECO:0000255" key="1">
    <source>
        <dbReference type="HAMAP-Rule" id="MF_00385"/>
    </source>
</evidence>
<evidence type="ECO:0000305" key="2"/>
<reference key="1">
    <citation type="submission" date="2008-01" db="EMBL/GenBank/DDBJ databases">
        <title>Complete sequence of Thermoanaerobacter sp. X514.</title>
        <authorList>
            <consortium name="US DOE Joint Genome Institute"/>
            <person name="Copeland A."/>
            <person name="Lucas S."/>
            <person name="Lapidus A."/>
            <person name="Barry K."/>
            <person name="Glavina del Rio T."/>
            <person name="Dalin E."/>
            <person name="Tice H."/>
            <person name="Pitluck S."/>
            <person name="Bruce D."/>
            <person name="Goodwin L."/>
            <person name="Saunders E."/>
            <person name="Brettin T."/>
            <person name="Detter J.C."/>
            <person name="Han C."/>
            <person name="Schmutz J."/>
            <person name="Larimer F."/>
            <person name="Land M."/>
            <person name="Hauser L."/>
            <person name="Kyrpides N."/>
            <person name="Kim E."/>
            <person name="Hemme C."/>
            <person name="Fields M.W."/>
            <person name="He Z."/>
            <person name="Zhou J."/>
            <person name="Richardson P."/>
        </authorList>
    </citation>
    <scope>NUCLEOTIDE SEQUENCE [LARGE SCALE GENOMIC DNA]</scope>
    <source>
        <strain>X514</strain>
    </source>
</reference>
<proteinExistence type="inferred from homology"/>
<name>RS16_THEPX</name>
<gene>
    <name evidence="1" type="primary">rpsP</name>
    <name type="ordered locus">Teth514_1712</name>
</gene>
<feature type="chain" id="PRO_1000196483" description="Small ribosomal subunit protein bS16">
    <location>
        <begin position="1"/>
        <end position="86"/>
    </location>
</feature>
<sequence>MAVRIRLKRFGAKKRPFYRIVVADSRSPRDGRFIDEIGYYNPIAQPAEIKIDVEKAKKWLSVGAQPSDTVKSLFKKEGIIGNSVSQ</sequence>
<comment type="similarity">
    <text evidence="1">Belongs to the bacterial ribosomal protein bS16 family.</text>
</comment>